<protein>
    <recommendedName>
        <fullName evidence="1">Elongation factor P-like protein</fullName>
    </recommendedName>
</protein>
<organism>
    <name type="scientific">Shigella boydii serotype 4 (strain Sb227)</name>
    <dbReference type="NCBI Taxonomy" id="300268"/>
    <lineage>
        <taxon>Bacteria</taxon>
        <taxon>Pseudomonadati</taxon>
        <taxon>Pseudomonadota</taxon>
        <taxon>Gammaproteobacteria</taxon>
        <taxon>Enterobacterales</taxon>
        <taxon>Enterobacteriaceae</taxon>
        <taxon>Shigella</taxon>
    </lineage>
</organism>
<evidence type="ECO:0000255" key="1">
    <source>
        <dbReference type="HAMAP-Rule" id="MF_00646"/>
    </source>
</evidence>
<evidence type="ECO:0000305" key="2"/>
<reference key="1">
    <citation type="journal article" date="2005" name="Nucleic Acids Res.">
        <title>Genome dynamics and diversity of Shigella species, the etiologic agents of bacillary dysentery.</title>
        <authorList>
            <person name="Yang F."/>
            <person name="Yang J."/>
            <person name="Zhang X."/>
            <person name="Chen L."/>
            <person name="Jiang Y."/>
            <person name="Yan Y."/>
            <person name="Tang X."/>
            <person name="Wang J."/>
            <person name="Xiong Z."/>
            <person name="Dong J."/>
            <person name="Xue Y."/>
            <person name="Zhu Y."/>
            <person name="Xu X."/>
            <person name="Sun L."/>
            <person name="Chen S."/>
            <person name="Nie H."/>
            <person name="Peng J."/>
            <person name="Xu J."/>
            <person name="Wang Y."/>
            <person name="Yuan Z."/>
            <person name="Wen Y."/>
            <person name="Yao Z."/>
            <person name="Shen Y."/>
            <person name="Qiang B."/>
            <person name="Hou Y."/>
            <person name="Yu J."/>
            <person name="Jin Q."/>
        </authorList>
    </citation>
    <scope>NUCLEOTIDE SEQUENCE [LARGE SCALE GENOMIC DNA]</scope>
    <source>
        <strain>Sb227</strain>
    </source>
</reference>
<sequence length="190" mass="21505">MPRANEIKKGMVLNYNGKLLLAKDIDIQSPTARGAATLYKMRFSDVRTGLKVEERFKGDDIVDTVTLTRRYVDFSYVDGNEYVFMDKEDYTPYTFTKDQIEEELLFMPEGGMPDMQVLTWDGQLLALELPQTVDLEIVETAPGIKGASASARNKPATLSTGLVIQVPEYLSPGEKIRIHIEERRYMGRAD</sequence>
<proteinExistence type="inferred from homology"/>
<comment type="similarity">
    <text evidence="1">Belongs to the elongation factor P family.</text>
</comment>
<comment type="sequence caution" evidence="2">
    <conflict type="erroneous initiation">
        <sequence resource="EMBL-CDS" id="ABB66729"/>
    </conflict>
</comment>
<feature type="chain" id="PRO_0000259900" description="Elongation factor P-like protein">
    <location>
        <begin position="1"/>
        <end position="190"/>
    </location>
</feature>
<dbReference type="EMBL" id="CP000036">
    <property type="protein sequence ID" value="ABB66729.1"/>
    <property type="status" value="ALT_INIT"/>
    <property type="molecule type" value="Genomic_DNA"/>
</dbReference>
<dbReference type="RefSeq" id="WP_001136824.1">
    <property type="nucleotide sequence ID" value="NC_007613.1"/>
</dbReference>
<dbReference type="SMR" id="Q31YX9"/>
<dbReference type="KEGG" id="sbo:SBO_2153"/>
<dbReference type="HOGENOM" id="CLU_074944_2_0_6"/>
<dbReference type="Proteomes" id="UP000007067">
    <property type="component" value="Chromosome"/>
</dbReference>
<dbReference type="GO" id="GO:0005829">
    <property type="term" value="C:cytosol"/>
    <property type="evidence" value="ECO:0007669"/>
    <property type="project" value="UniProtKB-ARBA"/>
</dbReference>
<dbReference type="GO" id="GO:0003746">
    <property type="term" value="F:translation elongation factor activity"/>
    <property type="evidence" value="ECO:0007669"/>
    <property type="project" value="UniProtKB-UniRule"/>
</dbReference>
<dbReference type="GO" id="GO:0043043">
    <property type="term" value="P:peptide biosynthetic process"/>
    <property type="evidence" value="ECO:0007669"/>
    <property type="project" value="InterPro"/>
</dbReference>
<dbReference type="CDD" id="cd04470">
    <property type="entry name" value="S1_EF-P_repeat_1"/>
    <property type="match status" value="1"/>
</dbReference>
<dbReference type="CDD" id="cd05794">
    <property type="entry name" value="S1_EF-P_repeat_2"/>
    <property type="match status" value="1"/>
</dbReference>
<dbReference type="FunFam" id="2.40.50.140:FF:000004">
    <property type="entry name" value="Elongation factor P"/>
    <property type="match status" value="1"/>
</dbReference>
<dbReference type="FunFam" id="2.30.30.30:FF:000011">
    <property type="entry name" value="Elongation factor P-like protein"/>
    <property type="match status" value="1"/>
</dbReference>
<dbReference type="FunFam" id="2.40.50.140:FF:000053">
    <property type="entry name" value="Elongation factor P-like protein"/>
    <property type="match status" value="1"/>
</dbReference>
<dbReference type="Gene3D" id="2.30.30.30">
    <property type="match status" value="1"/>
</dbReference>
<dbReference type="Gene3D" id="2.40.50.140">
    <property type="entry name" value="Nucleic acid-binding proteins"/>
    <property type="match status" value="2"/>
</dbReference>
<dbReference type="HAMAP" id="MF_00646">
    <property type="entry name" value="EFP"/>
    <property type="match status" value="1"/>
</dbReference>
<dbReference type="InterPro" id="IPR015365">
    <property type="entry name" value="Elong-fact-P_C"/>
</dbReference>
<dbReference type="InterPro" id="IPR012340">
    <property type="entry name" value="NA-bd_OB-fold"/>
</dbReference>
<dbReference type="InterPro" id="IPR014722">
    <property type="entry name" value="Rib_uL2_dom2"/>
</dbReference>
<dbReference type="InterPro" id="IPR020599">
    <property type="entry name" value="Transl_elong_fac_P/YeiP"/>
</dbReference>
<dbReference type="InterPro" id="IPR013185">
    <property type="entry name" value="Transl_elong_KOW-like"/>
</dbReference>
<dbReference type="InterPro" id="IPR011897">
    <property type="entry name" value="Transl_elong_p-like_YeiP"/>
</dbReference>
<dbReference type="InterPro" id="IPR001059">
    <property type="entry name" value="Transl_elong_P/YeiP_cen"/>
</dbReference>
<dbReference type="InterPro" id="IPR013852">
    <property type="entry name" value="Transl_elong_P/YeiP_CS"/>
</dbReference>
<dbReference type="InterPro" id="IPR008991">
    <property type="entry name" value="Translation_prot_SH3-like_sf"/>
</dbReference>
<dbReference type="NCBIfam" id="NF001810">
    <property type="entry name" value="PRK00529.1"/>
    <property type="match status" value="1"/>
</dbReference>
<dbReference type="NCBIfam" id="NF003392">
    <property type="entry name" value="PRK04542.1"/>
    <property type="match status" value="1"/>
</dbReference>
<dbReference type="NCBIfam" id="TIGR02178">
    <property type="entry name" value="yeiP"/>
    <property type="match status" value="1"/>
</dbReference>
<dbReference type="PANTHER" id="PTHR30053">
    <property type="entry name" value="ELONGATION FACTOR P"/>
    <property type="match status" value="1"/>
</dbReference>
<dbReference type="PANTHER" id="PTHR30053:SF14">
    <property type="entry name" value="TRANSLATION ELONGATION FACTOR KOW-LIKE DOMAIN-CONTAINING PROTEIN"/>
    <property type="match status" value="1"/>
</dbReference>
<dbReference type="Pfam" id="PF01132">
    <property type="entry name" value="EFP"/>
    <property type="match status" value="1"/>
</dbReference>
<dbReference type="Pfam" id="PF08207">
    <property type="entry name" value="EFP_N"/>
    <property type="match status" value="1"/>
</dbReference>
<dbReference type="Pfam" id="PF09285">
    <property type="entry name" value="Elong-fact-P_C"/>
    <property type="match status" value="1"/>
</dbReference>
<dbReference type="PIRSF" id="PIRSF005901">
    <property type="entry name" value="EF-P"/>
    <property type="match status" value="1"/>
</dbReference>
<dbReference type="SMART" id="SM01185">
    <property type="entry name" value="EFP"/>
    <property type="match status" value="1"/>
</dbReference>
<dbReference type="SMART" id="SM00841">
    <property type="entry name" value="Elong-fact-P_C"/>
    <property type="match status" value="1"/>
</dbReference>
<dbReference type="SUPFAM" id="SSF50249">
    <property type="entry name" value="Nucleic acid-binding proteins"/>
    <property type="match status" value="2"/>
</dbReference>
<dbReference type="SUPFAM" id="SSF50104">
    <property type="entry name" value="Translation proteins SH3-like domain"/>
    <property type="match status" value="1"/>
</dbReference>
<dbReference type="PROSITE" id="PS01275">
    <property type="entry name" value="EFP"/>
    <property type="match status" value="1"/>
</dbReference>
<name>EFPL_SHIBS</name>
<gene>
    <name evidence="1" type="primary">yeiP</name>
    <name type="ordered locus">SBO_2153</name>
</gene>
<accession>Q31YX9</accession>